<sequence length="157" mass="17498">MATMHDKITLQLPAKPEYVSLGRLSLSGIASRAGFSYEAIEDLKIAVSEAITNSVKHAFKGEDDGEITVEYLIYEDKLEVRVSDNGTSFDLETRKQEIGPYEVGEDAEMMRIGGLGLFLIETLMDDVKLYYDEGVSVVMTKYINEKQVEENAKSIST</sequence>
<organism>
    <name type="scientific">Listeria monocytogenes serotype 4b (strain F2365)</name>
    <dbReference type="NCBI Taxonomy" id="265669"/>
    <lineage>
        <taxon>Bacteria</taxon>
        <taxon>Bacillati</taxon>
        <taxon>Bacillota</taxon>
        <taxon>Bacilli</taxon>
        <taxon>Bacillales</taxon>
        <taxon>Listeriaceae</taxon>
        <taxon>Listeria</taxon>
    </lineage>
</organism>
<feature type="chain" id="PRO_0000203536" description="Serine-protein kinase RsbW">
    <location>
        <begin position="1"/>
        <end position="157"/>
    </location>
</feature>
<reference key="1">
    <citation type="journal article" date="2004" name="Nucleic Acids Res.">
        <title>Whole genome comparisons of serotype 4b and 1/2a strains of the food-borne pathogen Listeria monocytogenes reveal new insights into the core genome components of this species.</title>
        <authorList>
            <person name="Nelson K.E."/>
            <person name="Fouts D.E."/>
            <person name="Mongodin E.F."/>
            <person name="Ravel J."/>
            <person name="DeBoy R.T."/>
            <person name="Kolonay J.F."/>
            <person name="Rasko D.A."/>
            <person name="Angiuoli S.V."/>
            <person name="Gill S.R."/>
            <person name="Paulsen I.T."/>
            <person name="Peterson J.D."/>
            <person name="White O."/>
            <person name="Nelson W.C."/>
            <person name="Nierman W.C."/>
            <person name="Beanan M.J."/>
            <person name="Brinkac L.M."/>
            <person name="Daugherty S.C."/>
            <person name="Dodson R.J."/>
            <person name="Durkin A.S."/>
            <person name="Madupu R."/>
            <person name="Haft D.H."/>
            <person name="Selengut J."/>
            <person name="Van Aken S.E."/>
            <person name="Khouri H.M."/>
            <person name="Fedorova N."/>
            <person name="Forberger H.A."/>
            <person name="Tran B."/>
            <person name="Kathariou S."/>
            <person name="Wonderling L.D."/>
            <person name="Uhlich G.A."/>
            <person name="Bayles D.O."/>
            <person name="Luchansky J.B."/>
            <person name="Fraser C.M."/>
        </authorList>
    </citation>
    <scope>NUCLEOTIDE SEQUENCE [LARGE SCALE GENOMIC DNA]</scope>
    <source>
        <strain>F2365</strain>
    </source>
</reference>
<gene>
    <name evidence="1" type="primary">rsbW</name>
    <name type="ordered locus">LMOf2365_0913</name>
</gene>
<name>RSBW_LISMF</name>
<keyword id="KW-0067">ATP-binding</keyword>
<keyword id="KW-0418">Kinase</keyword>
<keyword id="KW-0547">Nucleotide-binding</keyword>
<keyword id="KW-0723">Serine/threonine-protein kinase</keyword>
<keyword id="KW-0808">Transferase</keyword>
<accession>Q721S2</accession>
<proteinExistence type="inferred from homology"/>
<evidence type="ECO:0000255" key="1">
    <source>
        <dbReference type="HAMAP-Rule" id="MF_00638"/>
    </source>
</evidence>
<dbReference type="EC" id="2.7.11.1" evidence="1"/>
<dbReference type="EMBL" id="AE017262">
    <property type="protein sequence ID" value="AAT03692.1"/>
    <property type="molecule type" value="Genomic_DNA"/>
</dbReference>
<dbReference type="RefSeq" id="WP_003724820.1">
    <property type="nucleotide sequence ID" value="NC_002973.6"/>
</dbReference>
<dbReference type="SMR" id="Q721S2"/>
<dbReference type="KEGG" id="lmf:LMOf2365_0913"/>
<dbReference type="HOGENOM" id="CLU_090336_11_1_9"/>
<dbReference type="GO" id="GO:0005524">
    <property type="term" value="F:ATP binding"/>
    <property type="evidence" value="ECO:0007669"/>
    <property type="project" value="UniProtKB-KW"/>
</dbReference>
<dbReference type="GO" id="GO:0106310">
    <property type="term" value="F:protein serine kinase activity"/>
    <property type="evidence" value="ECO:0007669"/>
    <property type="project" value="RHEA"/>
</dbReference>
<dbReference type="GO" id="GO:0004674">
    <property type="term" value="F:protein serine/threonine kinase activity"/>
    <property type="evidence" value="ECO:0007669"/>
    <property type="project" value="UniProtKB-KW"/>
</dbReference>
<dbReference type="GO" id="GO:0016989">
    <property type="term" value="F:sigma factor antagonist activity"/>
    <property type="evidence" value="ECO:0007669"/>
    <property type="project" value="InterPro"/>
</dbReference>
<dbReference type="CDD" id="cd16936">
    <property type="entry name" value="HATPase_RsbW-like"/>
    <property type="match status" value="1"/>
</dbReference>
<dbReference type="FunFam" id="3.30.565.10:FF:000026">
    <property type="entry name" value="Serine-protein kinase RsbW"/>
    <property type="match status" value="1"/>
</dbReference>
<dbReference type="Gene3D" id="3.30.565.10">
    <property type="entry name" value="Histidine kinase-like ATPase, C-terminal domain"/>
    <property type="match status" value="1"/>
</dbReference>
<dbReference type="HAMAP" id="MF_00638">
    <property type="entry name" value="Anti_sigma_B"/>
    <property type="match status" value="1"/>
</dbReference>
<dbReference type="InterPro" id="IPR050267">
    <property type="entry name" value="Anti-sigma-factor_SerPK"/>
</dbReference>
<dbReference type="InterPro" id="IPR036890">
    <property type="entry name" value="HATPase_C_sf"/>
</dbReference>
<dbReference type="InterPro" id="IPR010193">
    <property type="entry name" value="RsbW"/>
</dbReference>
<dbReference type="NCBIfam" id="NF003144">
    <property type="entry name" value="PRK04069.1"/>
    <property type="match status" value="1"/>
</dbReference>
<dbReference type="NCBIfam" id="TIGR01924">
    <property type="entry name" value="rsbW_low_gc"/>
    <property type="match status" value="1"/>
</dbReference>
<dbReference type="PANTHER" id="PTHR35526">
    <property type="entry name" value="ANTI-SIGMA-F FACTOR RSBW-RELATED"/>
    <property type="match status" value="1"/>
</dbReference>
<dbReference type="PANTHER" id="PTHR35526:SF9">
    <property type="entry name" value="SERINE-PROTEIN KINASE RSBW"/>
    <property type="match status" value="1"/>
</dbReference>
<dbReference type="Pfam" id="PF13581">
    <property type="entry name" value="HATPase_c_2"/>
    <property type="match status" value="1"/>
</dbReference>
<dbReference type="SUPFAM" id="SSF55874">
    <property type="entry name" value="ATPase domain of HSP90 chaperone/DNA topoisomerase II/histidine kinase"/>
    <property type="match status" value="1"/>
</dbReference>
<comment type="function">
    <text evidence="1">Negative regulator of sigma-B activity. Phosphorylates and inactivates its specific antagonist protein, RsbV. Upon phosphorylation of RsbV, RsbW is released and binds to sigma-B, thereby blocking its ability to form an RNA polymerase holoenzyme (E-sigma-B).</text>
</comment>
<comment type="catalytic activity">
    <reaction evidence="1">
        <text>L-seryl-[protein] + ATP = O-phospho-L-seryl-[protein] + ADP + H(+)</text>
        <dbReference type="Rhea" id="RHEA:17989"/>
        <dbReference type="Rhea" id="RHEA-COMP:9863"/>
        <dbReference type="Rhea" id="RHEA-COMP:11604"/>
        <dbReference type="ChEBI" id="CHEBI:15378"/>
        <dbReference type="ChEBI" id="CHEBI:29999"/>
        <dbReference type="ChEBI" id="CHEBI:30616"/>
        <dbReference type="ChEBI" id="CHEBI:83421"/>
        <dbReference type="ChEBI" id="CHEBI:456216"/>
        <dbReference type="EC" id="2.7.11.1"/>
    </reaction>
</comment>
<comment type="catalytic activity">
    <reaction evidence="1">
        <text>L-threonyl-[protein] + ATP = O-phospho-L-threonyl-[protein] + ADP + H(+)</text>
        <dbReference type="Rhea" id="RHEA:46608"/>
        <dbReference type="Rhea" id="RHEA-COMP:11060"/>
        <dbReference type="Rhea" id="RHEA-COMP:11605"/>
        <dbReference type="ChEBI" id="CHEBI:15378"/>
        <dbReference type="ChEBI" id="CHEBI:30013"/>
        <dbReference type="ChEBI" id="CHEBI:30616"/>
        <dbReference type="ChEBI" id="CHEBI:61977"/>
        <dbReference type="ChEBI" id="CHEBI:456216"/>
        <dbReference type="EC" id="2.7.11.1"/>
    </reaction>
</comment>
<comment type="similarity">
    <text evidence="1">Belongs to the anti-sigma-factor family.</text>
</comment>
<protein>
    <recommendedName>
        <fullName evidence="1">Serine-protein kinase RsbW</fullName>
        <ecNumber evidence="1">2.7.11.1</ecNumber>
    </recommendedName>
    <alternativeName>
        <fullName evidence="1">Anti-sigma-B factor</fullName>
    </alternativeName>
    <alternativeName>
        <fullName evidence="1">Sigma-B negative effector RsbW</fullName>
    </alternativeName>
</protein>